<feature type="chain" id="PRO_0000186885" description="Uncharacterized protein aq_850">
    <location>
        <begin position="1"/>
        <end position="138"/>
    </location>
</feature>
<feature type="transmembrane region" description="Helical" evidence="1">
    <location>
        <begin position="11"/>
        <end position="33"/>
    </location>
</feature>
<comment type="subcellular location">
    <subcellularLocation>
        <location evidence="2">Membrane</location>
        <topology evidence="2">Single-pass membrane protein</topology>
    </subcellularLocation>
</comment>
<dbReference type="EMBL" id="AE000657">
    <property type="protein sequence ID" value="AAC06980.1"/>
    <property type="molecule type" value="Genomic_DNA"/>
</dbReference>
<dbReference type="PIR" id="F70373">
    <property type="entry name" value="F70373"/>
</dbReference>
<dbReference type="RefSeq" id="NP_213578.1">
    <property type="nucleotide sequence ID" value="NC_000918.1"/>
</dbReference>
<dbReference type="RefSeq" id="WP_010880516.1">
    <property type="nucleotide sequence ID" value="NC_000918.1"/>
</dbReference>
<dbReference type="SMR" id="O67017"/>
<dbReference type="STRING" id="224324.aq_850"/>
<dbReference type="EnsemblBacteria" id="AAC06980">
    <property type="protein sequence ID" value="AAC06980"/>
    <property type="gene ID" value="aq_850"/>
</dbReference>
<dbReference type="KEGG" id="aae:aq_850"/>
<dbReference type="HOGENOM" id="CLU_1851004_0_0_0"/>
<dbReference type="InParanoid" id="O67017"/>
<dbReference type="Proteomes" id="UP000000798">
    <property type="component" value="Chromosome"/>
</dbReference>
<dbReference type="GO" id="GO:0016020">
    <property type="term" value="C:membrane"/>
    <property type="evidence" value="ECO:0007669"/>
    <property type="project" value="UniProtKB-SubCell"/>
</dbReference>
<reference key="1">
    <citation type="journal article" date="1998" name="Nature">
        <title>The complete genome of the hyperthermophilic bacterium Aquifex aeolicus.</title>
        <authorList>
            <person name="Deckert G."/>
            <person name="Warren P.V."/>
            <person name="Gaasterland T."/>
            <person name="Young W.G."/>
            <person name="Lenox A.L."/>
            <person name="Graham D.E."/>
            <person name="Overbeek R."/>
            <person name="Snead M.A."/>
            <person name="Keller M."/>
            <person name="Aujay M."/>
            <person name="Huber R."/>
            <person name="Feldman R.A."/>
            <person name="Short J.M."/>
            <person name="Olsen G.J."/>
            <person name="Swanson R.V."/>
        </authorList>
    </citation>
    <scope>NUCLEOTIDE SEQUENCE [LARGE SCALE GENOMIC DNA]</scope>
    <source>
        <strain>VF5</strain>
    </source>
</reference>
<keyword id="KW-0472">Membrane</keyword>
<keyword id="KW-1185">Reference proteome</keyword>
<keyword id="KW-0812">Transmembrane</keyword>
<keyword id="KW-1133">Transmembrane helix</keyword>
<gene>
    <name type="ordered locus">aq_850</name>
</gene>
<proteinExistence type="predicted"/>
<accession>O67017</accession>
<name>Y850_AQUAE</name>
<sequence>MALKKLRFEDILLGLTLSLTFLYPLIITLIILYQDAKRKEKEMKIFQKVENIFLSKRCRERILEIVPYLEFVSDSFIEKLIKVCEFTSGKKPKDKEYKNLEEESLYLIELERGTLKVLGKWISDEEFKLLLITYEPKT</sequence>
<protein>
    <recommendedName>
        <fullName>Uncharacterized protein aq_850</fullName>
    </recommendedName>
</protein>
<evidence type="ECO:0000255" key="1"/>
<evidence type="ECO:0000305" key="2"/>
<organism>
    <name type="scientific">Aquifex aeolicus (strain VF5)</name>
    <dbReference type="NCBI Taxonomy" id="224324"/>
    <lineage>
        <taxon>Bacteria</taxon>
        <taxon>Pseudomonadati</taxon>
        <taxon>Aquificota</taxon>
        <taxon>Aquificia</taxon>
        <taxon>Aquificales</taxon>
        <taxon>Aquificaceae</taxon>
        <taxon>Aquifex</taxon>
    </lineage>
</organism>